<name>ALBU_PETMA</name>
<dbReference type="EMBL" id="M74193">
    <property type="protein sequence ID" value="AAA49271.1"/>
    <property type="molecule type" value="mRNA"/>
</dbReference>
<dbReference type="PIR" id="S27941">
    <property type="entry name" value="S27941"/>
</dbReference>
<dbReference type="SMR" id="Q91274"/>
<dbReference type="GlyCosmos" id="Q91274">
    <property type="glycosylation" value="9 sites, No reported glycans"/>
</dbReference>
<dbReference type="Proteomes" id="UP001318040">
    <property type="component" value="Unplaced"/>
</dbReference>
<dbReference type="GO" id="GO:0072562">
    <property type="term" value="C:blood microparticle"/>
    <property type="evidence" value="ECO:0007669"/>
    <property type="project" value="TreeGrafter"/>
</dbReference>
<dbReference type="GO" id="GO:0005737">
    <property type="term" value="C:cytoplasm"/>
    <property type="evidence" value="ECO:0007669"/>
    <property type="project" value="TreeGrafter"/>
</dbReference>
<dbReference type="GO" id="GO:0008289">
    <property type="term" value="F:lipid binding"/>
    <property type="evidence" value="ECO:0007669"/>
    <property type="project" value="UniProtKB-KW"/>
</dbReference>
<dbReference type="GO" id="GO:0046872">
    <property type="term" value="F:metal ion binding"/>
    <property type="evidence" value="ECO:0007669"/>
    <property type="project" value="UniProtKB-KW"/>
</dbReference>
<dbReference type="CDD" id="cd00015">
    <property type="entry name" value="ALBUMIN"/>
    <property type="match status" value="6"/>
</dbReference>
<dbReference type="Gene3D" id="1.10.246.10">
    <property type="match status" value="14"/>
</dbReference>
<dbReference type="InterPro" id="IPR000264">
    <property type="entry name" value="ALB/AFP/VDB"/>
</dbReference>
<dbReference type="InterPro" id="IPR020858">
    <property type="entry name" value="Serum_albumin-like"/>
</dbReference>
<dbReference type="InterPro" id="IPR020857">
    <property type="entry name" value="Serum_albumin_CS"/>
</dbReference>
<dbReference type="InterPro" id="IPR014760">
    <property type="entry name" value="Serum_albumin_N"/>
</dbReference>
<dbReference type="PANTHER" id="PTHR11385:SF14">
    <property type="entry name" value="AFAMIN"/>
    <property type="match status" value="1"/>
</dbReference>
<dbReference type="PANTHER" id="PTHR11385">
    <property type="entry name" value="SERUM ALBUMIN-RELATED"/>
    <property type="match status" value="1"/>
</dbReference>
<dbReference type="Pfam" id="PF00273">
    <property type="entry name" value="Serum_albumin"/>
    <property type="match status" value="8"/>
</dbReference>
<dbReference type="PRINTS" id="PR00802">
    <property type="entry name" value="SERUMALBUMIN"/>
</dbReference>
<dbReference type="SMART" id="SM00103">
    <property type="entry name" value="ALBUMIN"/>
    <property type="match status" value="7"/>
</dbReference>
<dbReference type="SUPFAM" id="SSF48552">
    <property type="entry name" value="Serum albumin-like"/>
    <property type="match status" value="7"/>
</dbReference>
<dbReference type="PROSITE" id="PS00212">
    <property type="entry name" value="ALBUMIN_1"/>
    <property type="match status" value="7"/>
</dbReference>
<dbReference type="PROSITE" id="PS51438">
    <property type="entry name" value="ALBUMIN_2"/>
    <property type="match status" value="7"/>
</dbReference>
<protein>
    <recommendedName>
        <fullName>Serum albumin SDS-1</fullName>
    </recommendedName>
</protein>
<reference key="1">
    <citation type="journal article" date="1992" name="Protein Sci.">
        <title>Characterization, primary structure, and evolution of lamprey plasma albumin.</title>
        <authorList>
            <person name="Doolittle R.F."/>
            <person name="Gray J.E."/>
        </authorList>
    </citation>
    <scope>NUCLEOTIDE SEQUENCE [MRNA]</scope>
    <scope>PARTIAL PROTEIN SEQUENCE</scope>
    <source>
        <tissue>Liver</tissue>
    </source>
</reference>
<reference key="2">
    <citation type="journal article" date="2000" name="Comp. Biochem. Physiol.">
        <title>An albumin-like protein in the serum of non-parasitic brook lamprey (Lampetra appendix) is restricted to preadult phases of the life cycle in contrast to the parasitic species Petromyzon marinus.</title>
        <authorList>
            <person name="Danis M.H."/>
            <person name="Filosa M.F."/>
            <person name="Youson J.H."/>
        </authorList>
    </citation>
    <scope>DEVELOPMENTAL STAGE</scope>
</reference>
<feature type="signal peptide" evidence="2">
    <location>
        <begin position="1"/>
        <end position="23"/>
    </location>
</feature>
<feature type="propeptide" id="PRO_0000001093">
    <location>
        <begin position="24"/>
        <end position="29"/>
    </location>
</feature>
<feature type="chain" id="PRO_0000001094" description="Serum albumin SDS-1">
    <location>
        <begin position="30"/>
        <end position="1423"/>
    </location>
</feature>
<feature type="domain" description="Albumin 1" evidence="3">
    <location>
        <begin position="29"/>
        <end position="230"/>
    </location>
</feature>
<feature type="domain" description="Albumin 2" evidence="3">
    <location>
        <begin position="231"/>
        <end position="426"/>
    </location>
</feature>
<feature type="domain" description="Albumin 3" evidence="3">
    <location>
        <begin position="427"/>
        <end position="608"/>
    </location>
</feature>
<feature type="domain" description="Albumin 4" evidence="3">
    <location>
        <begin position="609"/>
        <end position="811"/>
    </location>
</feature>
<feature type="domain" description="Albumin 5" evidence="3">
    <location>
        <begin position="812"/>
        <end position="1031"/>
    </location>
</feature>
<feature type="repeat" description="2-1">
    <location>
        <begin position="913"/>
        <end position="916"/>
    </location>
</feature>
<feature type="repeat" description="2-2">
    <location>
        <begin position="917"/>
        <end position="920"/>
    </location>
</feature>
<feature type="repeat" description="2-3">
    <location>
        <begin position="921"/>
        <end position="924"/>
    </location>
</feature>
<feature type="repeat" description="2-4">
    <location>
        <begin position="925"/>
        <end position="928"/>
    </location>
</feature>
<feature type="repeat" description="2-5">
    <location>
        <begin position="929"/>
        <end position="932"/>
    </location>
</feature>
<feature type="repeat" description="2-6">
    <location>
        <begin position="933"/>
        <end position="935"/>
    </location>
</feature>
<feature type="repeat" description="2-7">
    <location>
        <begin position="936"/>
        <end position="939"/>
    </location>
</feature>
<feature type="domain" description="Albumin 6" evidence="3">
    <location>
        <begin position="1032"/>
        <end position="1226"/>
    </location>
</feature>
<feature type="domain" description="Albumin 7" evidence="3">
    <location>
        <begin position="1227"/>
        <end position="1422"/>
    </location>
</feature>
<feature type="region of interest" description="Disordered" evidence="4">
    <location>
        <begin position="910"/>
        <end position="936"/>
    </location>
</feature>
<feature type="region of interest" description="7 X 4 AA tandem repeats of S-T-T-T">
    <location>
        <begin position="913"/>
        <end position="939"/>
    </location>
</feature>
<feature type="binding site" evidence="1">
    <location>
        <position position="36"/>
    </location>
    <ligand>
        <name>Cu cation</name>
        <dbReference type="ChEBI" id="CHEBI:23378"/>
    </ligand>
</feature>
<feature type="glycosylation site" description="N-linked (GlcNAc...) asparagine" evidence="2">
    <location>
        <position position="490"/>
    </location>
</feature>
<feature type="glycosylation site" description="N-linked (GlcNAc...) asparagine" evidence="2">
    <location>
        <position position="541"/>
    </location>
</feature>
<feature type="glycosylation site" description="N-linked (GlcNAc...) asparagine" evidence="2">
    <location>
        <position position="652"/>
    </location>
</feature>
<feature type="glycosylation site" description="N-linked (GlcNAc...) asparagine" evidence="2">
    <location>
        <position position="754"/>
    </location>
</feature>
<feature type="glycosylation site" description="N-linked (GlcNAc...) asparagine" evidence="2">
    <location>
        <position position="908"/>
    </location>
</feature>
<feature type="glycosylation site" description="N-linked (GlcNAc...) asparagine" evidence="2">
    <location>
        <position position="911"/>
    </location>
</feature>
<feature type="glycosylation site" description="N-linked (GlcNAc...) asparagine" evidence="2">
    <location>
        <position position="954"/>
    </location>
</feature>
<feature type="glycosylation site" description="N-linked (GlcNAc...) asparagine" evidence="2">
    <location>
        <position position="1070"/>
    </location>
</feature>
<feature type="glycosylation site" description="N-linked (GlcNAc...) asparagine" evidence="2">
    <location>
        <position position="1236"/>
    </location>
</feature>
<feature type="disulfide bond" evidence="3">
    <location>
        <begin position="42"/>
        <end position="88"/>
    </location>
</feature>
<feature type="disulfide bond" evidence="3">
    <location>
        <begin position="87"/>
        <end position="96"/>
    </location>
</feature>
<feature type="disulfide bond" evidence="3">
    <location>
        <begin position="109"/>
        <end position="125"/>
    </location>
</feature>
<feature type="disulfide bond" evidence="3">
    <location>
        <begin position="124"/>
        <end position="135"/>
    </location>
</feature>
<feature type="disulfide bond" evidence="3">
    <location>
        <begin position="167"/>
        <end position="212"/>
    </location>
</feature>
<feature type="disulfide bond" evidence="3">
    <location>
        <begin position="211"/>
        <end position="221"/>
    </location>
</feature>
<feature type="disulfide bond" evidence="3">
    <location>
        <begin position="244"/>
        <end position="290"/>
    </location>
</feature>
<feature type="disulfide bond" evidence="3">
    <location>
        <begin position="289"/>
        <end position="298"/>
    </location>
</feature>
<feature type="disulfide bond" evidence="3">
    <location>
        <begin position="311"/>
        <end position="327"/>
    </location>
</feature>
<feature type="disulfide bond" evidence="3">
    <location>
        <begin position="326"/>
        <end position="337"/>
    </location>
</feature>
<feature type="disulfide bond" evidence="3">
    <location>
        <begin position="363"/>
        <end position="408"/>
    </location>
</feature>
<feature type="disulfide bond" evidence="3">
    <location>
        <begin position="407"/>
        <end position="416"/>
    </location>
</feature>
<feature type="disulfide bond" evidence="3">
    <location>
        <begin position="439"/>
        <end position="485"/>
    </location>
</feature>
<feature type="disulfide bond" evidence="3">
    <location>
        <begin position="484"/>
        <end position="493"/>
    </location>
</feature>
<feature type="disulfide bond" evidence="3">
    <location>
        <begin position="506"/>
        <end position="522"/>
    </location>
</feature>
<feature type="disulfide bond" evidence="3">
    <location>
        <begin position="521"/>
        <end position="532"/>
    </location>
</feature>
<feature type="disulfide bond" evidence="3">
    <location>
        <begin position="556"/>
        <end position="601"/>
    </location>
</feature>
<feature type="disulfide bond" evidence="3">
    <location>
        <begin position="622"/>
        <end position="668"/>
    </location>
</feature>
<feature type="disulfide bond" evidence="3">
    <location>
        <begin position="667"/>
        <end position="676"/>
    </location>
</feature>
<feature type="disulfide bond" evidence="3">
    <location>
        <begin position="689"/>
        <end position="705"/>
    </location>
</feature>
<feature type="disulfide bond" evidence="3">
    <location>
        <begin position="704"/>
        <end position="715"/>
    </location>
</feature>
<feature type="disulfide bond" evidence="3">
    <location>
        <begin position="747"/>
        <end position="792"/>
    </location>
</feature>
<feature type="disulfide bond" evidence="3">
    <location>
        <begin position="791"/>
        <end position="802"/>
    </location>
</feature>
<feature type="disulfide bond" evidence="3">
    <location>
        <begin position="825"/>
        <end position="871"/>
    </location>
</feature>
<feature type="disulfide bond" evidence="3">
    <location>
        <begin position="870"/>
        <end position="879"/>
    </location>
</feature>
<feature type="disulfide bond" evidence="3">
    <location>
        <begin position="892"/>
        <end position="907"/>
    </location>
</feature>
<feature type="disulfide bond" evidence="3">
    <location>
        <begin position="906"/>
        <end position="947"/>
    </location>
</feature>
<feature type="disulfide bond" evidence="3">
    <location>
        <begin position="969"/>
        <end position="1014"/>
    </location>
</feature>
<feature type="disulfide bond" evidence="3">
    <location>
        <begin position="1013"/>
        <end position="1022"/>
    </location>
</feature>
<feature type="disulfide bond" evidence="3">
    <location>
        <begin position="1045"/>
        <end position="1091"/>
    </location>
</feature>
<feature type="disulfide bond" evidence="3">
    <location>
        <begin position="1090"/>
        <end position="1099"/>
    </location>
</feature>
<feature type="disulfide bond" evidence="3">
    <location>
        <begin position="1112"/>
        <end position="1128"/>
    </location>
</feature>
<feature type="disulfide bond" evidence="3">
    <location>
        <begin position="1127"/>
        <end position="1138"/>
    </location>
</feature>
<feature type="disulfide bond" evidence="3">
    <location>
        <begin position="1163"/>
        <end position="1208"/>
    </location>
</feature>
<feature type="disulfide bond" evidence="3">
    <location>
        <begin position="1207"/>
        <end position="1216"/>
    </location>
</feature>
<feature type="disulfide bond" evidence="3">
    <location>
        <begin position="1239"/>
        <end position="1285"/>
    </location>
</feature>
<feature type="disulfide bond" evidence="3">
    <location>
        <begin position="1284"/>
        <end position="1291"/>
    </location>
</feature>
<feature type="disulfide bond" evidence="3">
    <location>
        <begin position="1304"/>
        <end position="1320"/>
    </location>
</feature>
<feature type="disulfide bond" evidence="3">
    <location>
        <begin position="1319"/>
        <end position="1330"/>
    </location>
</feature>
<feature type="disulfide bond" evidence="3">
    <location>
        <begin position="1359"/>
        <end position="1404"/>
    </location>
</feature>
<feature type="disulfide bond" evidence="3">
    <location>
        <begin position="1403"/>
        <end position="1412"/>
    </location>
</feature>
<proteinExistence type="evidence at protein level"/>
<gene>
    <name type="primary">SDS-1</name>
</gene>
<keyword id="KW-0165">Cleavage on pair of basic residues</keyword>
<keyword id="KW-0186">Copper</keyword>
<keyword id="KW-0903">Direct protein sequencing</keyword>
<keyword id="KW-1015">Disulfide bond</keyword>
<keyword id="KW-0325">Glycoprotein</keyword>
<keyword id="KW-0446">Lipid-binding</keyword>
<keyword id="KW-0479">Metal-binding</keyword>
<keyword id="KW-0677">Repeat</keyword>
<keyword id="KW-0964">Secreted</keyword>
<keyword id="KW-0732">Signal</keyword>
<sequence length="1423" mass="159094">MGKAMLKLCITLMVLVFSGTAESKGVMRREDESFPHLKSRLCGGLNGLGEDAYRSHCVVYYTKRMGVVSLDHVEELANHCLRIVKQCCAEGAADDCLQTELAAVQEQVCTRMSEAKDVPLVGRCCALAGSERHDCFHHAGGVAEGEGAWPHALPVTSPPEYDSVTVCALHATANARLYDTLLWEFSRRYPSASDSHLIALANEFITGLTTCCLVEEEHGACLATLREDFKHKLTEASHKSQNLCKALKSLGKEKFEDRIIVRFTQRAPQAPFELIQKLAHRFEVLAEKCCELGHSDRCLVEERYTVDDELCLEQSFVATCPRLSSCCSLSGSSRAQCLETVPVLETSDKASPATPTLPISEQCTLWAGKPVEFHKRVVWQISHRYPTTGVAQVEALAHHYLEHLTICCASEDKDTCIATEVAEFKSEVEKVHTKSDWWCRMSDLLGTDRFNLLLIVTYSQRVPQATFEQVEEISHHFALITRKCCSHRKNGSCFLEERYALHDAICRDEAWLSGLAEVSRCCAMDGRARILCFDELSSHLNASVEERPELCSTSLCSKYHDLGFEFKQRVAYGFGQRFPKAAMGQMRDLISKYLAMVQRCCDAMSDFKMDVEEVELRAHRLCLDAHQLGEEKLADRIMIGLAQRISVASFVNISSVALHFAQSVIKCCDADHEKTCFMEQEFALEDQVCSDSEALSHIPSVSRCCELHPFDRSVCFHSLRSTQASTLASTHVAVGKDDSLPGHVEECQAFASGNHSLTDQVMFEFARRHPRASVSQVESLARLYSELARACCALTDADQESCLHTARSQARQEALKSLQRSERICNTLSAIGKEKFEDRIVIALSQKATDASFEQILEIANRMSRGLARCCEQGNNVGCLMDHRHALHEAICSTPDGSLPQSVAACCNTSNTSTTTSTTTSTTTSTTTSTTTSTTSTTTAAEIRDSCFDNLQANVSRAHAPFYSNSQLCLMKLRTPHRFLERFLWEFGRRHPQAALSQVEELAEMYVKMTDSCCGKLHSKSCFTEQRHTIHMEIRHAYAEVQHICGSLHSRGEETFIQREVTLLSQKAPNASFEKVSQLARHFLSLAKKCCAPDHAAGCFLEEPYAIHDEVCRDDEVVDQVGGLATCCRMSGTSRAKCLAQLPRDLGRHGNRETPEFDELKICELRRDNPAVLMEKILYEFGRRHSDSAVSEVKNFAQKFSHSVTECCTSEKTHECFVEKRAAIEKVIKDEEAKGNLTCQRLKAQGVEHFEQLVILNFARAAKSLPMEKVVEFAHRFTRIAGQCCEHDTHCLIDESFHLHAEMCGDHGYIMAHPGVANCCKSDVSEQGTCFKIHEDVHHAEEILSKDVSPAHPTAERVCLRYRQFPEKFINLALFELVHRLPLLESSVLRRKALAYTGFTDDCCRAVDKTACFTEKLEAIKSS</sequence>
<organism>
    <name type="scientific">Petromyzon marinus</name>
    <name type="common">Sea lamprey</name>
    <dbReference type="NCBI Taxonomy" id="7757"/>
    <lineage>
        <taxon>Eukaryota</taxon>
        <taxon>Metazoa</taxon>
        <taxon>Chordata</taxon>
        <taxon>Craniata</taxon>
        <taxon>Vertebrata</taxon>
        <taxon>Cyclostomata</taxon>
        <taxon>Hyperoartia</taxon>
        <taxon>Petromyzontiformes</taxon>
        <taxon>Petromyzontidae</taxon>
        <taxon>Petromyzon</taxon>
    </lineage>
</organism>
<comment type="function">
    <text>Serum albumin, the main protein of plasma, has a good binding capacity for water, Ca(2+), Na(+), K(+), fatty acids, hormones, bilirubin and drugs. Its main function is the regulation of the colloidal osmotic pressure of blood.</text>
</comment>
<comment type="subcellular location">
    <subcellularLocation>
        <location>Secreted</location>
    </subcellularLocation>
</comment>
<comment type="tissue specificity">
    <text>Plasma.</text>
</comment>
<comment type="developmental stage">
    <text evidence="5">Adults.</text>
</comment>
<comment type="miscellaneous">
    <text>In the sea lamprey, there are two forms of albumin, AS and SDS-1.</text>
</comment>
<comment type="similarity">
    <text evidence="3">Belongs to the ALB/AFP/VDB family.</text>
</comment>
<evidence type="ECO:0000250" key="1"/>
<evidence type="ECO:0000255" key="2"/>
<evidence type="ECO:0000255" key="3">
    <source>
        <dbReference type="PROSITE-ProRule" id="PRU00769"/>
    </source>
</evidence>
<evidence type="ECO:0000256" key="4">
    <source>
        <dbReference type="SAM" id="MobiDB-lite"/>
    </source>
</evidence>
<evidence type="ECO:0000269" key="5">
    <source>
    </source>
</evidence>
<accession>Q91274</accession>